<feature type="chain" id="PRO_0000359945" description="Cyclo(L-leucyl-L-leucyl) synthase">
    <location>
        <begin position="1"/>
        <end position="248"/>
    </location>
</feature>
<feature type="active site" description="Nucleophile" evidence="1">
    <location>
        <position position="37"/>
    </location>
</feature>
<feature type="binding site" evidence="1">
    <location>
        <position position="40"/>
    </location>
    <ligand>
        <name>substrate</name>
    </ligand>
</feature>
<feature type="binding site" evidence="1">
    <location>
        <begin position="180"/>
        <end position="184"/>
    </location>
    <ligand>
        <name>substrate</name>
    </ligand>
</feature>
<feature type="binding site" evidence="1">
    <location>
        <position position="204"/>
    </location>
    <ligand>
        <name>substrate</name>
    </ligand>
</feature>
<feature type="binding site" evidence="1">
    <location>
        <begin position="209"/>
        <end position="210"/>
    </location>
    <ligand>
        <name>substrate</name>
    </ligand>
</feature>
<feature type="site" description="Could have a critical role in the catalytic mechanism" evidence="1">
    <location>
        <position position="40"/>
    </location>
</feature>
<feature type="site" description="Could be involved in aa-tRNA binding" evidence="1">
    <location>
        <position position="88"/>
    </location>
</feature>
<feature type="site" description="Could be involved in aa-tRNA binding" evidence="1">
    <location>
        <position position="98"/>
    </location>
</feature>
<feature type="site" description="Could be involved in aa-tRNA binding(Leu) binding" evidence="1">
    <location>
        <position position="180"/>
    </location>
</feature>
<feature type="site" description="Could have a critical role in the catalytic mechanism" evidence="1">
    <location>
        <position position="184"/>
    </location>
</feature>
<reference key="1">
    <citation type="submission" date="1997-11" db="EMBL/GenBank/DDBJ databases">
        <title>Nucleotide sequence of the 300-304 chromosomal segment of Bacillus subtilis.</title>
        <authorList>
            <person name="Lazarevic V."/>
            <person name="Soldo B."/>
            <person name="Rivolta C."/>
            <person name="Reynolds S."/>
            <person name="Mauel C."/>
            <person name="Karamata D."/>
        </authorList>
    </citation>
    <scope>NUCLEOTIDE SEQUENCE [GENOMIC DNA]</scope>
</reference>
<reference key="2">
    <citation type="journal article" date="1997" name="Nature">
        <title>The complete genome sequence of the Gram-positive bacterium Bacillus subtilis.</title>
        <authorList>
            <person name="Kunst F."/>
            <person name="Ogasawara N."/>
            <person name="Moszer I."/>
            <person name="Albertini A.M."/>
            <person name="Alloni G."/>
            <person name="Azevedo V."/>
            <person name="Bertero M.G."/>
            <person name="Bessieres P."/>
            <person name="Bolotin A."/>
            <person name="Borchert S."/>
            <person name="Borriss R."/>
            <person name="Boursier L."/>
            <person name="Brans A."/>
            <person name="Braun M."/>
            <person name="Brignell S.C."/>
            <person name="Bron S."/>
            <person name="Brouillet S."/>
            <person name="Bruschi C.V."/>
            <person name="Caldwell B."/>
            <person name="Capuano V."/>
            <person name="Carter N.M."/>
            <person name="Choi S.-K."/>
            <person name="Codani J.-J."/>
            <person name="Connerton I.F."/>
            <person name="Cummings N.J."/>
            <person name="Daniel R.A."/>
            <person name="Denizot F."/>
            <person name="Devine K.M."/>
            <person name="Duesterhoeft A."/>
            <person name="Ehrlich S.D."/>
            <person name="Emmerson P.T."/>
            <person name="Entian K.-D."/>
            <person name="Errington J."/>
            <person name="Fabret C."/>
            <person name="Ferrari E."/>
            <person name="Foulger D."/>
            <person name="Fritz C."/>
            <person name="Fujita M."/>
            <person name="Fujita Y."/>
            <person name="Fuma S."/>
            <person name="Galizzi A."/>
            <person name="Galleron N."/>
            <person name="Ghim S.-Y."/>
            <person name="Glaser P."/>
            <person name="Goffeau A."/>
            <person name="Golightly E.J."/>
            <person name="Grandi G."/>
            <person name="Guiseppi G."/>
            <person name="Guy B.J."/>
            <person name="Haga K."/>
            <person name="Haiech J."/>
            <person name="Harwood C.R."/>
            <person name="Henaut A."/>
            <person name="Hilbert H."/>
            <person name="Holsappel S."/>
            <person name="Hosono S."/>
            <person name="Hullo M.-F."/>
            <person name="Itaya M."/>
            <person name="Jones L.-M."/>
            <person name="Joris B."/>
            <person name="Karamata D."/>
            <person name="Kasahara Y."/>
            <person name="Klaerr-Blanchard M."/>
            <person name="Klein C."/>
            <person name="Kobayashi Y."/>
            <person name="Koetter P."/>
            <person name="Koningstein G."/>
            <person name="Krogh S."/>
            <person name="Kumano M."/>
            <person name="Kurita K."/>
            <person name="Lapidus A."/>
            <person name="Lardinois S."/>
            <person name="Lauber J."/>
            <person name="Lazarevic V."/>
            <person name="Lee S.-M."/>
            <person name="Levine A."/>
            <person name="Liu H."/>
            <person name="Masuda S."/>
            <person name="Mauel C."/>
            <person name="Medigue C."/>
            <person name="Medina N."/>
            <person name="Mellado R.P."/>
            <person name="Mizuno M."/>
            <person name="Moestl D."/>
            <person name="Nakai S."/>
            <person name="Noback M."/>
            <person name="Noone D."/>
            <person name="O'Reilly M."/>
            <person name="Ogawa K."/>
            <person name="Ogiwara A."/>
            <person name="Oudega B."/>
            <person name="Park S.-H."/>
            <person name="Parro V."/>
            <person name="Pohl T.M."/>
            <person name="Portetelle D."/>
            <person name="Porwollik S."/>
            <person name="Prescott A.M."/>
            <person name="Presecan E."/>
            <person name="Pujic P."/>
            <person name="Purnelle B."/>
            <person name="Rapoport G."/>
            <person name="Rey M."/>
            <person name="Reynolds S."/>
            <person name="Rieger M."/>
            <person name="Rivolta C."/>
            <person name="Rocha E."/>
            <person name="Roche B."/>
            <person name="Rose M."/>
            <person name="Sadaie Y."/>
            <person name="Sato T."/>
            <person name="Scanlan E."/>
            <person name="Schleich S."/>
            <person name="Schroeter R."/>
            <person name="Scoffone F."/>
            <person name="Sekiguchi J."/>
            <person name="Sekowska A."/>
            <person name="Seror S.J."/>
            <person name="Serror P."/>
            <person name="Shin B.-S."/>
            <person name="Soldo B."/>
            <person name="Sorokin A."/>
            <person name="Tacconi E."/>
            <person name="Takagi T."/>
            <person name="Takahashi H."/>
            <person name="Takemaru K."/>
            <person name="Takeuchi M."/>
            <person name="Tamakoshi A."/>
            <person name="Tanaka T."/>
            <person name="Terpstra P."/>
            <person name="Tognoni A."/>
            <person name="Tosato V."/>
            <person name="Uchiyama S."/>
            <person name="Vandenbol M."/>
            <person name="Vannier F."/>
            <person name="Vassarotti A."/>
            <person name="Viari A."/>
            <person name="Wambutt R."/>
            <person name="Wedler E."/>
            <person name="Wedler H."/>
            <person name="Weitzenegger T."/>
            <person name="Winters P."/>
            <person name="Wipat A."/>
            <person name="Yamamoto H."/>
            <person name="Yamane K."/>
            <person name="Yasumoto K."/>
            <person name="Yata K."/>
            <person name="Yoshida K."/>
            <person name="Yoshikawa H.-F."/>
            <person name="Zumstein E."/>
            <person name="Yoshikawa H."/>
            <person name="Danchin A."/>
        </authorList>
    </citation>
    <scope>NUCLEOTIDE SEQUENCE [LARGE SCALE GENOMIC DNA]</scope>
    <source>
        <strain>168</strain>
    </source>
</reference>
<reference key="3">
    <citation type="journal article" date="2009" name="Nat. Chem. Biol.">
        <title>Cyclodipeptide synthases arec a family of tRNA-dependent peptide bond-forming enzymes.</title>
        <authorList>
            <person name="Gondry M."/>
            <person name="Sauguet L."/>
            <person name="Belin P."/>
            <person name="Thai R."/>
            <person name="Amouroux R."/>
            <person name="Tellier C."/>
            <person name="Tuphile K."/>
            <person name="Jacquet M."/>
            <person name="Braud S."/>
            <person name="Courcon M."/>
            <person name="Masson C."/>
            <person name="Dubois S."/>
            <person name="Lautru S."/>
            <person name="Lecoq A."/>
            <person name="Hashimoto S."/>
            <person name="Genet R."/>
            <person name="Pernodet J.L."/>
        </authorList>
    </citation>
    <scope>FUNCTION</scope>
    <scope>CATALYTIC ACTIVITY</scope>
    <scope>SUBSTRATE SPECIFICITY</scope>
</reference>
<reference key="4">
    <citation type="journal article" date="2011" name="Proc. Natl. Acad. Sci. U.S.A.">
        <title>Structural basis for nonribosomal peptide synthesis by an aminoacyl-tRNA synthetase paralog.</title>
        <authorList>
            <person name="Bonnefond L."/>
            <person name="Arai T."/>
            <person name="Sakaguchi Y."/>
            <person name="Suzuki T."/>
            <person name="Ishitani R."/>
            <person name="Nureki O."/>
        </authorList>
    </citation>
    <scope>SUBUNIT</scope>
</reference>
<gene>
    <name type="primary">yvmC</name>
    <name type="ordered locus">BSU35070</name>
</gene>
<sequence length="248" mass="28507">MTGMVTERRSVHFIAEALTENCREIFERRRHVLVGISPFNSRFSEDYIYRLIGWAKAQFKSVSVLLAGHEAANLLEALGTPRGKAERKVRKEVSRNRRFAERALVAHGGDPKAIHTFSDFIDNKAYQLLRQEVEHAFFEQPHFRHACLDMSREAIIGRARGVSLMMEEVSEDMLNLAVEYVIAELPFFIGAPDILEVEETLLAYHRPWKLGEKISNHEFSICMRPNQGYLIVQEMAQMLSEKRITSEG</sequence>
<organism>
    <name type="scientific">Bacillus subtilis (strain 168)</name>
    <dbReference type="NCBI Taxonomy" id="224308"/>
    <lineage>
        <taxon>Bacteria</taxon>
        <taxon>Bacillati</taxon>
        <taxon>Bacillota</taxon>
        <taxon>Bacilli</taxon>
        <taxon>Bacillales</taxon>
        <taxon>Bacillaceae</taxon>
        <taxon>Bacillus</taxon>
    </lineage>
</organism>
<protein>
    <recommendedName>
        <fullName>Cyclo(L-leucyl-L-leucyl) synthase</fullName>
        <ecNumber>2.3.2.22</ecNumber>
    </recommendedName>
    <alternativeName>
        <fullName>Cyclodileucine synthase</fullName>
    </alternativeName>
    <alternativeName>
        <fullName>Cyclodipeptide synthase</fullName>
        <shortName>CDPS</shortName>
    </alternativeName>
</protein>
<dbReference type="EC" id="2.3.2.22"/>
<dbReference type="EMBL" id="AF017113">
    <property type="protein sequence ID" value="AAC67279.1"/>
    <property type="molecule type" value="Genomic_DNA"/>
</dbReference>
<dbReference type="EMBL" id="AL009126">
    <property type="protein sequence ID" value="CAB15512.1"/>
    <property type="molecule type" value="Genomic_DNA"/>
</dbReference>
<dbReference type="PIR" id="A70044">
    <property type="entry name" value="A70044"/>
</dbReference>
<dbReference type="SMR" id="O34351"/>
<dbReference type="FunCoup" id="O34351">
    <property type="interactions" value="4"/>
</dbReference>
<dbReference type="STRING" id="224308.BSU35070"/>
<dbReference type="PaxDb" id="224308-BSU35070"/>
<dbReference type="EnsemblBacteria" id="CAB15512">
    <property type="protein sequence ID" value="CAB15512"/>
    <property type="gene ID" value="BSU_35070"/>
</dbReference>
<dbReference type="GeneID" id="936633"/>
<dbReference type="KEGG" id="bsu:BSU35070"/>
<dbReference type="PATRIC" id="fig|224308.179.peg.3796"/>
<dbReference type="eggNOG" id="ENOG50332PQ">
    <property type="taxonomic scope" value="Bacteria"/>
</dbReference>
<dbReference type="InParanoid" id="O34351"/>
<dbReference type="OrthoDB" id="2895472at2"/>
<dbReference type="BioCyc" id="BSUB:BSU35070-MONOMER"/>
<dbReference type="BioCyc" id="MetaCyc:BSU35070-MONOMER"/>
<dbReference type="BRENDA" id="2.3.2.22">
    <property type="organism ID" value="658"/>
</dbReference>
<dbReference type="Proteomes" id="UP000001570">
    <property type="component" value="Chromosome"/>
</dbReference>
<dbReference type="GO" id="GO:0016755">
    <property type="term" value="F:aminoacyltransferase activity"/>
    <property type="evidence" value="ECO:0000314"/>
    <property type="project" value="UniProtKB"/>
</dbReference>
<dbReference type="GO" id="GO:0046148">
    <property type="term" value="P:pigment biosynthetic process"/>
    <property type="evidence" value="ECO:0000314"/>
    <property type="project" value="UniProtKB"/>
</dbReference>
<dbReference type="FunFam" id="3.40.50.11710:FF:000001">
    <property type="entry name" value="Cyclo(L-leucyl-L-leucyl) synthase"/>
    <property type="match status" value="1"/>
</dbReference>
<dbReference type="Gene3D" id="3.40.50.11710">
    <property type="entry name" value="Cyclodipeptide synthase"/>
    <property type="match status" value="1"/>
</dbReference>
<dbReference type="InterPro" id="IPR030903">
    <property type="entry name" value="CDPS"/>
</dbReference>
<dbReference type="InterPro" id="IPR038622">
    <property type="entry name" value="CDPS_sf"/>
</dbReference>
<dbReference type="NCBIfam" id="TIGR04539">
    <property type="entry name" value="tRNA_cyclodipep"/>
    <property type="match status" value="1"/>
</dbReference>
<dbReference type="Pfam" id="PF16715">
    <property type="entry name" value="CDPS"/>
    <property type="match status" value="1"/>
</dbReference>
<accession>O34351</accession>
<accession>Q795E6</accession>
<evidence type="ECO:0000250" key="1"/>
<evidence type="ECO:0000269" key="2">
    <source>
    </source>
</evidence>
<evidence type="ECO:0000269" key="3">
    <source>
    </source>
</evidence>
<evidence type="ECO:0000305" key="4"/>
<name>CDLS_BACSU</name>
<comment type="function">
    <text evidence="2">Involved in the biosynthesis of pulcherrimin, a red extracellular pigment. It uses activated amino acids in the form of aminoacyl-tRNAs (aa-tRNAs) as substrates to catalyze the ATP-independent formation of cyclodipeptides which are intermediates in diketopiperazine (DKP) biosynthetic pathways. Catalyzes the formation of cyclo(L-Leu-L-Leu) (cLL) from L-leucyl-tRNA(Leu). Can also incorporate various nonpolar residues, such as L-phenylalanine, L-leucine and methionine, into cyclodipeptides.</text>
</comment>
<comment type="catalytic activity">
    <reaction evidence="2">
        <text>2 L-leucyl-tRNA(Leu) = cyclo(L-leucyl-L-leucyl) + 2 tRNA(Leu) + 2 H(+)</text>
        <dbReference type="Rhea" id="RHEA:46452"/>
        <dbReference type="Rhea" id="RHEA-COMP:9613"/>
        <dbReference type="Rhea" id="RHEA-COMP:9622"/>
        <dbReference type="ChEBI" id="CHEBI:15378"/>
        <dbReference type="ChEBI" id="CHEBI:67269"/>
        <dbReference type="ChEBI" id="CHEBI:78442"/>
        <dbReference type="ChEBI" id="CHEBI:78494"/>
        <dbReference type="EC" id="2.3.2.22"/>
    </reaction>
</comment>
<comment type="subunit">
    <text evidence="3">Monomer.</text>
</comment>
<comment type="similarity">
    <text evidence="4">Belongs to the CDPS family.</text>
</comment>
<keyword id="KW-1185">Reference proteome</keyword>
<keyword id="KW-0808">Transferase</keyword>
<proteinExistence type="evidence at protein level"/>